<keyword id="KW-0028">Amino-acid biosynthesis</keyword>
<keyword id="KW-0963">Cytoplasm</keyword>
<keyword id="KW-0554">One-carbon metabolism</keyword>
<keyword id="KW-0663">Pyridoxal phosphate</keyword>
<keyword id="KW-0808">Transferase</keyword>
<proteinExistence type="inferred from homology"/>
<gene>
    <name evidence="1" type="primary">glyA</name>
    <name type="ordered locus">PXO_04405</name>
</gene>
<dbReference type="EC" id="2.1.2.1" evidence="1"/>
<dbReference type="EMBL" id="CP000967">
    <property type="protein sequence ID" value="ACD57657.1"/>
    <property type="molecule type" value="Genomic_DNA"/>
</dbReference>
<dbReference type="RefSeq" id="WP_011260263.1">
    <property type="nucleotide sequence ID" value="NC_010717.2"/>
</dbReference>
<dbReference type="SMR" id="B2SNV6"/>
<dbReference type="KEGG" id="xop:PXO_04405"/>
<dbReference type="eggNOG" id="COG0112">
    <property type="taxonomic scope" value="Bacteria"/>
</dbReference>
<dbReference type="HOGENOM" id="CLU_022477_2_1_6"/>
<dbReference type="UniPathway" id="UPA00193"/>
<dbReference type="UniPathway" id="UPA00288">
    <property type="reaction ID" value="UER01023"/>
</dbReference>
<dbReference type="Proteomes" id="UP000001740">
    <property type="component" value="Chromosome"/>
</dbReference>
<dbReference type="GO" id="GO:0005829">
    <property type="term" value="C:cytosol"/>
    <property type="evidence" value="ECO:0007669"/>
    <property type="project" value="TreeGrafter"/>
</dbReference>
<dbReference type="GO" id="GO:0004372">
    <property type="term" value="F:glycine hydroxymethyltransferase activity"/>
    <property type="evidence" value="ECO:0007669"/>
    <property type="project" value="UniProtKB-UniRule"/>
</dbReference>
<dbReference type="GO" id="GO:0030170">
    <property type="term" value="F:pyridoxal phosphate binding"/>
    <property type="evidence" value="ECO:0007669"/>
    <property type="project" value="UniProtKB-UniRule"/>
</dbReference>
<dbReference type="GO" id="GO:0019264">
    <property type="term" value="P:glycine biosynthetic process from serine"/>
    <property type="evidence" value="ECO:0007669"/>
    <property type="project" value="UniProtKB-UniRule"/>
</dbReference>
<dbReference type="GO" id="GO:0035999">
    <property type="term" value="P:tetrahydrofolate interconversion"/>
    <property type="evidence" value="ECO:0007669"/>
    <property type="project" value="UniProtKB-UniRule"/>
</dbReference>
<dbReference type="CDD" id="cd00378">
    <property type="entry name" value="SHMT"/>
    <property type="match status" value="1"/>
</dbReference>
<dbReference type="FunFam" id="3.40.640.10:FF:000001">
    <property type="entry name" value="Serine hydroxymethyltransferase"/>
    <property type="match status" value="1"/>
</dbReference>
<dbReference type="FunFam" id="3.90.1150.10:FF:000003">
    <property type="entry name" value="Serine hydroxymethyltransferase"/>
    <property type="match status" value="1"/>
</dbReference>
<dbReference type="Gene3D" id="3.90.1150.10">
    <property type="entry name" value="Aspartate Aminotransferase, domain 1"/>
    <property type="match status" value="1"/>
</dbReference>
<dbReference type="Gene3D" id="3.40.640.10">
    <property type="entry name" value="Type I PLP-dependent aspartate aminotransferase-like (Major domain)"/>
    <property type="match status" value="1"/>
</dbReference>
<dbReference type="HAMAP" id="MF_00051">
    <property type="entry name" value="SHMT"/>
    <property type="match status" value="1"/>
</dbReference>
<dbReference type="InterPro" id="IPR015424">
    <property type="entry name" value="PyrdxlP-dep_Trfase"/>
</dbReference>
<dbReference type="InterPro" id="IPR015421">
    <property type="entry name" value="PyrdxlP-dep_Trfase_major"/>
</dbReference>
<dbReference type="InterPro" id="IPR015422">
    <property type="entry name" value="PyrdxlP-dep_Trfase_small"/>
</dbReference>
<dbReference type="InterPro" id="IPR001085">
    <property type="entry name" value="Ser_HO-MeTrfase"/>
</dbReference>
<dbReference type="InterPro" id="IPR049943">
    <property type="entry name" value="Ser_HO-MeTrfase-like"/>
</dbReference>
<dbReference type="InterPro" id="IPR019798">
    <property type="entry name" value="Ser_HO-MeTrfase_PLP_BS"/>
</dbReference>
<dbReference type="InterPro" id="IPR039429">
    <property type="entry name" value="SHMT-like_dom"/>
</dbReference>
<dbReference type="NCBIfam" id="NF000586">
    <property type="entry name" value="PRK00011.1"/>
    <property type="match status" value="1"/>
</dbReference>
<dbReference type="PANTHER" id="PTHR11680">
    <property type="entry name" value="SERINE HYDROXYMETHYLTRANSFERASE"/>
    <property type="match status" value="1"/>
</dbReference>
<dbReference type="PANTHER" id="PTHR11680:SF50">
    <property type="entry name" value="SERINE HYDROXYMETHYLTRANSFERASE"/>
    <property type="match status" value="1"/>
</dbReference>
<dbReference type="Pfam" id="PF00464">
    <property type="entry name" value="SHMT"/>
    <property type="match status" value="1"/>
</dbReference>
<dbReference type="PIRSF" id="PIRSF000412">
    <property type="entry name" value="SHMT"/>
    <property type="match status" value="1"/>
</dbReference>
<dbReference type="SUPFAM" id="SSF53383">
    <property type="entry name" value="PLP-dependent transferases"/>
    <property type="match status" value="1"/>
</dbReference>
<dbReference type="PROSITE" id="PS00096">
    <property type="entry name" value="SHMT"/>
    <property type="match status" value="1"/>
</dbReference>
<sequence length="417" mass="44912">MFSRDVRLETYDPELAKAIAAEAGRQEDHVELIASENYCSQLVMEAQGSQLTNKYAEGYPGKRYYGGCAFVDIAEQLAIDRIKQVFDADYANVQPHSGSQANQAVYLALLQPGDTILGMSLAHGGHLTHGAKANVSGKLFNAVQYGVNEQGLIDYDEVQRLATEHTPKMVVAGFSAYSQKIDWARFRAIADSVGAYLFVDMAHIAGLVAAGVYPSPMEHAHVVTSTTHKTLRGPRGGIIVAKGASEELQKKLQSIVFPGIQGGPLMHVIAAKAVAFKEALEPAFKTYQQQVVKNAQAMANTLIARGYKIVSGGTENHLMLVDMIGRDVSGKDAEAALGKAHITVNKNAVPNDPRSPFVTSGLRLGTPAITTRGYKEPDSIDLANWIADVLDAPTDEAVLAKVRDAVTAQCKRYPVYG</sequence>
<protein>
    <recommendedName>
        <fullName evidence="1">Serine hydroxymethyltransferase</fullName>
        <shortName evidence="1">SHMT</shortName>
        <shortName evidence="1">Serine methylase</shortName>
        <ecNumber evidence="1">2.1.2.1</ecNumber>
    </recommendedName>
</protein>
<comment type="function">
    <text evidence="1">Catalyzes the reversible interconversion of serine and glycine with tetrahydrofolate (THF) serving as the one-carbon carrier. This reaction serves as the major source of one-carbon groups required for the biosynthesis of purines, thymidylate, methionine, and other important biomolecules. Also exhibits THF-independent aldolase activity toward beta-hydroxyamino acids, producing glycine and aldehydes, via a retro-aldol mechanism.</text>
</comment>
<comment type="catalytic activity">
    <reaction evidence="1">
        <text>(6R)-5,10-methylene-5,6,7,8-tetrahydrofolate + glycine + H2O = (6S)-5,6,7,8-tetrahydrofolate + L-serine</text>
        <dbReference type="Rhea" id="RHEA:15481"/>
        <dbReference type="ChEBI" id="CHEBI:15377"/>
        <dbReference type="ChEBI" id="CHEBI:15636"/>
        <dbReference type="ChEBI" id="CHEBI:33384"/>
        <dbReference type="ChEBI" id="CHEBI:57305"/>
        <dbReference type="ChEBI" id="CHEBI:57453"/>
        <dbReference type="EC" id="2.1.2.1"/>
    </reaction>
</comment>
<comment type="cofactor">
    <cofactor evidence="1">
        <name>pyridoxal 5'-phosphate</name>
        <dbReference type="ChEBI" id="CHEBI:597326"/>
    </cofactor>
</comment>
<comment type="pathway">
    <text evidence="1">One-carbon metabolism; tetrahydrofolate interconversion.</text>
</comment>
<comment type="pathway">
    <text evidence="1">Amino-acid biosynthesis; glycine biosynthesis; glycine from L-serine: step 1/1.</text>
</comment>
<comment type="subunit">
    <text evidence="1">Homodimer.</text>
</comment>
<comment type="subcellular location">
    <subcellularLocation>
        <location evidence="1">Cytoplasm</location>
    </subcellularLocation>
</comment>
<comment type="similarity">
    <text evidence="1">Belongs to the SHMT family.</text>
</comment>
<accession>B2SNV6</accession>
<name>GLYA_XANOP</name>
<feature type="chain" id="PRO_1000091597" description="Serine hydroxymethyltransferase">
    <location>
        <begin position="1"/>
        <end position="417"/>
    </location>
</feature>
<feature type="binding site" evidence="1">
    <location>
        <position position="121"/>
    </location>
    <ligand>
        <name>(6S)-5,6,7,8-tetrahydrofolate</name>
        <dbReference type="ChEBI" id="CHEBI:57453"/>
    </ligand>
</feature>
<feature type="binding site" evidence="1">
    <location>
        <begin position="125"/>
        <end position="127"/>
    </location>
    <ligand>
        <name>(6S)-5,6,7,8-tetrahydrofolate</name>
        <dbReference type="ChEBI" id="CHEBI:57453"/>
    </ligand>
</feature>
<feature type="binding site" evidence="1">
    <location>
        <begin position="355"/>
        <end position="357"/>
    </location>
    <ligand>
        <name>(6S)-5,6,7,8-tetrahydrofolate</name>
        <dbReference type="ChEBI" id="CHEBI:57453"/>
    </ligand>
</feature>
<feature type="site" description="Plays an important role in substrate specificity" evidence="1">
    <location>
        <position position="228"/>
    </location>
</feature>
<feature type="modified residue" description="N6-(pyridoxal phosphate)lysine" evidence="1">
    <location>
        <position position="229"/>
    </location>
</feature>
<evidence type="ECO:0000255" key="1">
    <source>
        <dbReference type="HAMAP-Rule" id="MF_00051"/>
    </source>
</evidence>
<reference key="1">
    <citation type="journal article" date="2008" name="BMC Genomics">
        <title>Genome sequence and rapid evolution of the rice pathogen Xanthomonas oryzae pv. oryzae PXO99A.</title>
        <authorList>
            <person name="Salzberg S.L."/>
            <person name="Sommer D.D."/>
            <person name="Schatz M.C."/>
            <person name="Phillippy A.M."/>
            <person name="Rabinowicz P.D."/>
            <person name="Tsuge S."/>
            <person name="Furutani A."/>
            <person name="Ochiai H."/>
            <person name="Delcher A.L."/>
            <person name="Kelley D."/>
            <person name="Madupu R."/>
            <person name="Puiu D."/>
            <person name="Radune D."/>
            <person name="Shumway M."/>
            <person name="Trapnell C."/>
            <person name="Aparna G."/>
            <person name="Jha G."/>
            <person name="Pandey A."/>
            <person name="Patil P.B."/>
            <person name="Ishihara H."/>
            <person name="Meyer D.F."/>
            <person name="Szurek B."/>
            <person name="Verdier V."/>
            <person name="Koebnik R."/>
            <person name="Dow J.M."/>
            <person name="Ryan R.P."/>
            <person name="Hirata H."/>
            <person name="Tsuyumu S."/>
            <person name="Won Lee S."/>
            <person name="Seo Y.-S."/>
            <person name="Sriariyanum M."/>
            <person name="Ronald P.C."/>
            <person name="Sonti R.V."/>
            <person name="Van Sluys M.-A."/>
            <person name="Leach J.E."/>
            <person name="White F.F."/>
            <person name="Bogdanove A.J."/>
        </authorList>
    </citation>
    <scope>NUCLEOTIDE SEQUENCE [LARGE SCALE GENOMIC DNA]</scope>
    <source>
        <strain>PXO99A</strain>
    </source>
</reference>
<organism>
    <name type="scientific">Xanthomonas oryzae pv. oryzae (strain PXO99A)</name>
    <dbReference type="NCBI Taxonomy" id="360094"/>
    <lineage>
        <taxon>Bacteria</taxon>
        <taxon>Pseudomonadati</taxon>
        <taxon>Pseudomonadota</taxon>
        <taxon>Gammaproteobacteria</taxon>
        <taxon>Lysobacterales</taxon>
        <taxon>Lysobacteraceae</taxon>
        <taxon>Xanthomonas</taxon>
    </lineage>
</organism>